<protein>
    <recommendedName>
        <fullName>Carbohydrate sulfotransferase 6</fullName>
    </recommendedName>
    <alternativeName>
        <fullName>Corneal N-acetylglucosamine-6-O-sulfotransferase</fullName>
        <shortName>C-GlcNAc6ST</shortName>
        <shortName>hCGn6ST</shortName>
        <ecNumber evidence="6 19">2.8.2.21</ecNumber>
    </alternativeName>
    <alternativeName>
        <fullName>Galactose/N-acetylglucosamine/N-acetylglucosamine 6-O-sulfotransferase 4-beta</fullName>
        <shortName evidence="24">GST4-beta</shortName>
    </alternativeName>
    <alternativeName>
        <fullName>N-acetylglucosamine 6-O-sulfotransferase 5</fullName>
        <shortName>GlcNAc6ST-5</shortName>
        <shortName>Gn6st-5</shortName>
    </alternativeName>
</protein>
<evidence type="ECO:0000250" key="1"/>
<evidence type="ECO:0000255" key="2"/>
<evidence type="ECO:0000269" key="3">
    <source>
    </source>
</evidence>
<evidence type="ECO:0000269" key="4">
    <source>
    </source>
</evidence>
<evidence type="ECO:0000269" key="5">
    <source>
    </source>
</evidence>
<evidence type="ECO:0000269" key="6">
    <source>
    </source>
</evidence>
<evidence type="ECO:0000269" key="7">
    <source>
    </source>
</evidence>
<evidence type="ECO:0000269" key="8">
    <source>
    </source>
</evidence>
<evidence type="ECO:0000269" key="9">
    <source>
    </source>
</evidence>
<evidence type="ECO:0000269" key="10">
    <source>
    </source>
</evidence>
<evidence type="ECO:0000269" key="11">
    <source>
    </source>
</evidence>
<evidence type="ECO:0000269" key="12">
    <source>
    </source>
</evidence>
<evidence type="ECO:0000269" key="13">
    <source>
    </source>
</evidence>
<evidence type="ECO:0000269" key="14">
    <source>
    </source>
</evidence>
<evidence type="ECO:0000269" key="15">
    <source>
    </source>
</evidence>
<evidence type="ECO:0000269" key="16">
    <source>
    </source>
</evidence>
<evidence type="ECO:0000269" key="17">
    <source>
    </source>
</evidence>
<evidence type="ECO:0000269" key="18">
    <source>
    </source>
</evidence>
<evidence type="ECO:0000269" key="19">
    <source>
    </source>
</evidence>
<evidence type="ECO:0000269" key="20">
    <source>
    </source>
</evidence>
<evidence type="ECO:0000269" key="21">
    <source>
    </source>
</evidence>
<evidence type="ECO:0000269" key="22">
    <source>
    </source>
</evidence>
<evidence type="ECO:0000269" key="23">
    <source>
    </source>
</evidence>
<evidence type="ECO:0000303" key="24">
    <source>
    </source>
</evidence>
<evidence type="ECO:0000305" key="25"/>
<evidence type="ECO:0000312" key="26">
    <source>
        <dbReference type="HGNC" id="HGNC:6938"/>
    </source>
</evidence>
<sequence length="395" mass="44099">MWLPRVSSTAVTALLLAQTFLLLFLVSRPGPSSPAGGEARVHVLVLSSWRSGSSFVGQLFNQHPDVFYLMEPAWHVWTTLSQGSAATLHMAVRDLVRSVFLCDMDVFDAYLPWRRNLSDLFQWAVSRALCSPPACSAFPRGAISSEAVCKPLCARQSFTLAREACRSYSHVVLKEVRFFNLQVLYPLLSDPALNLRIVHLVRDPRAVLRSREQTAKALARDNGIVLGTNGTWVEADPGLRVVREVCRSHVRIAEAATLKPPPFLRGRYRLVRFEDLAREPLAEIRALYAFTGLSLTPQLEAWIHNITHGSGPGARREAFKTSSRNALNVSQAWRHALPFAKIRRVQELCAGALQLLGYRPVYSEDEQRNLALDLVLPRGLNGFTWASSTASHPRN</sequence>
<dbReference type="EC" id="2.8.2.21" evidence="6 19"/>
<dbReference type="EMBL" id="AF219990">
    <property type="protein sequence ID" value="AAG26325.1"/>
    <property type="molecule type" value="mRNA"/>
</dbReference>
<dbReference type="EMBL" id="AF219991">
    <property type="protein sequence ID" value="AAG26327.1"/>
    <property type="molecule type" value="Genomic_DNA"/>
</dbReference>
<dbReference type="EMBL" id="AF280086">
    <property type="protein sequence ID" value="AAG48244.1"/>
    <property type="molecule type" value="mRNA"/>
</dbReference>
<dbReference type="EMBL" id="CH471114">
    <property type="protein sequence ID" value="EAW95640.1"/>
    <property type="molecule type" value="Genomic_DNA"/>
</dbReference>
<dbReference type="EMBL" id="CH471114">
    <property type="protein sequence ID" value="EAW95641.1"/>
    <property type="molecule type" value="Genomic_DNA"/>
</dbReference>
<dbReference type="EMBL" id="BC074883">
    <property type="protein sequence ID" value="AAH74883.1"/>
    <property type="molecule type" value="mRNA"/>
</dbReference>
<dbReference type="EMBL" id="BC074834">
    <property type="protein sequence ID" value="AAH74834.1"/>
    <property type="molecule type" value="mRNA"/>
</dbReference>
<dbReference type="CCDS" id="CCDS10918.1"/>
<dbReference type="RefSeq" id="NP_067628.1">
    <property type="nucleotide sequence ID" value="NM_021615.5"/>
</dbReference>
<dbReference type="RefSeq" id="XP_005256012.1">
    <property type="nucleotide sequence ID" value="XM_005255955.4"/>
</dbReference>
<dbReference type="RefSeq" id="XP_011521387.1">
    <property type="nucleotide sequence ID" value="XM_011523085.2"/>
</dbReference>
<dbReference type="BioGRID" id="110334">
    <property type="interactions" value="65"/>
</dbReference>
<dbReference type="FunCoup" id="Q9GZX3">
    <property type="interactions" value="600"/>
</dbReference>
<dbReference type="IntAct" id="Q9GZX3">
    <property type="interactions" value="16"/>
</dbReference>
<dbReference type="STRING" id="9606.ENSP00000328983"/>
<dbReference type="GlyCosmos" id="Q9GZX3">
    <property type="glycosylation" value="4 sites, No reported glycans"/>
</dbReference>
<dbReference type="GlyGen" id="Q9GZX3">
    <property type="glycosylation" value="5 sites, 1 O-linked glycan (1 site)"/>
</dbReference>
<dbReference type="iPTMnet" id="Q9GZX3"/>
<dbReference type="PhosphoSitePlus" id="Q9GZX3"/>
<dbReference type="BioMuta" id="CHST6"/>
<dbReference type="jPOST" id="Q9GZX3"/>
<dbReference type="MassIVE" id="Q9GZX3"/>
<dbReference type="PaxDb" id="9606-ENSP00000328983"/>
<dbReference type="PeptideAtlas" id="Q9GZX3"/>
<dbReference type="ProteomicsDB" id="80165"/>
<dbReference type="Antibodypedia" id="30313">
    <property type="antibodies" value="201 antibodies from 24 providers"/>
</dbReference>
<dbReference type="DNASU" id="4166"/>
<dbReference type="Ensembl" id="ENST00000332272.9">
    <property type="protein sequence ID" value="ENSP00000328983.4"/>
    <property type="gene ID" value="ENSG00000183196.10"/>
</dbReference>
<dbReference type="Ensembl" id="ENST00000390664.3">
    <property type="protein sequence ID" value="ENSP00000375079.2"/>
    <property type="gene ID" value="ENSG00000183196.10"/>
</dbReference>
<dbReference type="Ensembl" id="ENST00000649341.1">
    <property type="protein sequence ID" value="ENSP00000497635.1"/>
    <property type="gene ID" value="ENSG00000183196.10"/>
</dbReference>
<dbReference type="Ensembl" id="ENST00000649824.1">
    <property type="protein sequence ID" value="ENSP00000496806.1"/>
    <property type="gene ID" value="ENSG00000183196.10"/>
</dbReference>
<dbReference type="GeneID" id="4166"/>
<dbReference type="KEGG" id="hsa:4166"/>
<dbReference type="MANE-Select" id="ENST00000332272.9">
    <property type="protein sequence ID" value="ENSP00000328983.4"/>
    <property type="RefSeq nucleotide sequence ID" value="NM_021615.5"/>
    <property type="RefSeq protein sequence ID" value="NP_067628.1"/>
</dbReference>
<dbReference type="UCSC" id="uc002fef.4">
    <property type="organism name" value="human"/>
</dbReference>
<dbReference type="AGR" id="HGNC:6938"/>
<dbReference type="CTD" id="4166"/>
<dbReference type="DisGeNET" id="4166"/>
<dbReference type="GeneCards" id="CHST6"/>
<dbReference type="HGNC" id="HGNC:6938">
    <property type="gene designation" value="CHST6"/>
</dbReference>
<dbReference type="HPA" id="ENSG00000183196">
    <property type="expression patterns" value="Tissue enhanced (adrenal gland, brain, cervix)"/>
</dbReference>
<dbReference type="MalaCards" id="CHST6"/>
<dbReference type="MIM" id="217800">
    <property type="type" value="phenotype"/>
</dbReference>
<dbReference type="MIM" id="605294">
    <property type="type" value="gene"/>
</dbReference>
<dbReference type="neXtProt" id="NX_Q9GZX3"/>
<dbReference type="OpenTargets" id="ENSG00000183196"/>
<dbReference type="Orphanet" id="98969">
    <property type="disease" value="Macular corneal dystrophy"/>
</dbReference>
<dbReference type="PharmGKB" id="PA26506"/>
<dbReference type="VEuPathDB" id="HostDB:ENSG00000183196"/>
<dbReference type="eggNOG" id="ENOG502QQMD">
    <property type="taxonomic scope" value="Eukaryota"/>
</dbReference>
<dbReference type="GeneTree" id="ENSGT00940000162788"/>
<dbReference type="HOGENOM" id="CLU_028381_3_1_1"/>
<dbReference type="InParanoid" id="Q9GZX3"/>
<dbReference type="OMA" id="VFLMIQT"/>
<dbReference type="OrthoDB" id="6138663at2759"/>
<dbReference type="PAN-GO" id="Q9GZX3">
    <property type="GO annotations" value="4 GO annotations based on evolutionary models"/>
</dbReference>
<dbReference type="PhylomeDB" id="Q9GZX3"/>
<dbReference type="TreeFam" id="TF342871"/>
<dbReference type="PathwayCommons" id="Q9GZX3"/>
<dbReference type="Reactome" id="R-HSA-2022854">
    <property type="pathway name" value="Keratan sulfate biosynthesis"/>
</dbReference>
<dbReference type="Reactome" id="R-HSA-3656225">
    <property type="pathway name" value="Defective CHST6 causes MCDC1"/>
</dbReference>
<dbReference type="SignaLink" id="Q9GZX3"/>
<dbReference type="BioGRID-ORCS" id="4166">
    <property type="hits" value="14 hits in 1151 CRISPR screens"/>
</dbReference>
<dbReference type="ChiTaRS" id="CHST6">
    <property type="organism name" value="human"/>
</dbReference>
<dbReference type="GeneWiki" id="CHST6"/>
<dbReference type="GenomeRNAi" id="4166"/>
<dbReference type="Pharos" id="Q9GZX3">
    <property type="development level" value="Tbio"/>
</dbReference>
<dbReference type="PRO" id="PR:Q9GZX3"/>
<dbReference type="Proteomes" id="UP000005640">
    <property type="component" value="Chromosome 16"/>
</dbReference>
<dbReference type="RNAct" id="Q9GZX3">
    <property type="molecule type" value="protein"/>
</dbReference>
<dbReference type="Bgee" id="ENSG00000183196">
    <property type="expression patterns" value="Expressed in bronchial epithelial cell and 118 other cell types or tissues"/>
</dbReference>
<dbReference type="GO" id="GO:0005794">
    <property type="term" value="C:Golgi apparatus"/>
    <property type="evidence" value="ECO:0000304"/>
    <property type="project" value="UniProtKB"/>
</dbReference>
<dbReference type="GO" id="GO:0000139">
    <property type="term" value="C:Golgi membrane"/>
    <property type="evidence" value="ECO:0000304"/>
    <property type="project" value="Reactome"/>
</dbReference>
<dbReference type="GO" id="GO:0005802">
    <property type="term" value="C:trans-Golgi network"/>
    <property type="evidence" value="ECO:0000318"/>
    <property type="project" value="GO_Central"/>
</dbReference>
<dbReference type="GO" id="GO:0045130">
    <property type="term" value="F:keratan sulfotransferase activity"/>
    <property type="evidence" value="ECO:0000314"/>
    <property type="project" value="UniProtKB"/>
</dbReference>
<dbReference type="GO" id="GO:0001517">
    <property type="term" value="F:N-acetylglucosamine 6-O-sulfotransferase activity"/>
    <property type="evidence" value="ECO:0000314"/>
    <property type="project" value="UniProtKB"/>
</dbReference>
<dbReference type="GO" id="GO:0005975">
    <property type="term" value="P:carbohydrate metabolic process"/>
    <property type="evidence" value="ECO:0007669"/>
    <property type="project" value="InterPro"/>
</dbReference>
<dbReference type="GO" id="GO:0018146">
    <property type="term" value="P:keratan sulfate proteoglycan biosynthetic process"/>
    <property type="evidence" value="ECO:0000314"/>
    <property type="project" value="UniProtKB"/>
</dbReference>
<dbReference type="GO" id="GO:0006044">
    <property type="term" value="P:N-acetylglucosamine metabolic process"/>
    <property type="evidence" value="ECO:0000314"/>
    <property type="project" value="UniProtKB"/>
</dbReference>
<dbReference type="GO" id="GO:0006790">
    <property type="term" value="P:sulfur compound metabolic process"/>
    <property type="evidence" value="ECO:0000314"/>
    <property type="project" value="UniProtKB"/>
</dbReference>
<dbReference type="FunFam" id="3.40.50.300:FF:000703">
    <property type="entry name" value="Sulfotransferase"/>
    <property type="match status" value="1"/>
</dbReference>
<dbReference type="Gene3D" id="3.40.50.300">
    <property type="entry name" value="P-loop containing nucleotide triphosphate hydrolases"/>
    <property type="match status" value="1"/>
</dbReference>
<dbReference type="InterPro" id="IPR016469">
    <property type="entry name" value="Carbohydrate_sulfotransferase"/>
</dbReference>
<dbReference type="InterPro" id="IPR051135">
    <property type="entry name" value="Gal/GlcNAc/GalNAc_ST"/>
</dbReference>
<dbReference type="InterPro" id="IPR027417">
    <property type="entry name" value="P-loop_NTPase"/>
</dbReference>
<dbReference type="InterPro" id="IPR000863">
    <property type="entry name" value="Sulfotransferase_dom"/>
</dbReference>
<dbReference type="PANTHER" id="PTHR10704">
    <property type="entry name" value="CARBOHYDRATE SULFOTRANSFERASE"/>
    <property type="match status" value="1"/>
</dbReference>
<dbReference type="PANTHER" id="PTHR10704:SF4">
    <property type="entry name" value="CARBOHYDRATE SULFOTRANSFERASE 6"/>
    <property type="match status" value="1"/>
</dbReference>
<dbReference type="Pfam" id="PF00685">
    <property type="entry name" value="Sulfotransfer_1"/>
    <property type="match status" value="1"/>
</dbReference>
<dbReference type="PIRSF" id="PIRSF005883">
    <property type="entry name" value="Carbohydrate_sulfotransferase"/>
    <property type="match status" value="1"/>
</dbReference>
<dbReference type="SUPFAM" id="SSF52540">
    <property type="entry name" value="P-loop containing nucleoside triphosphate hydrolases"/>
    <property type="match status" value="1"/>
</dbReference>
<reference key="1">
    <citation type="journal article" date="2000" name="Nat. Genet.">
        <title>Macular corneal dystrophy type I and type II are caused by distinct mutations in a new sulphotransferase gene.</title>
        <authorList>
            <person name="Akama T.O."/>
            <person name="Nishida K."/>
            <person name="Nakayama J."/>
            <person name="Watanabe H."/>
            <person name="Ozaki K."/>
            <person name="Nakamura T."/>
            <person name="Dota A."/>
            <person name="Kawasaki S."/>
            <person name="Inoue Y."/>
            <person name="Maeda N."/>
            <person name="Yamamoto S."/>
            <person name="Fujiwara T."/>
            <person name="Thonar E.J.-M.A."/>
            <person name="Shimomura Y."/>
            <person name="Kinoshita S."/>
            <person name="Tanigami A."/>
            <person name="Fukuda M.N."/>
        </authorList>
    </citation>
    <scope>NUCLEOTIDE SEQUENCE [GENOMIC DNA / MRNA]</scope>
    <scope>TISSUE SPECIFICITY</scope>
    <scope>VARIANTS MCD CYS-50; ARG-174; GLU-203; TRP-211 AND LYS-274</scope>
</reference>
<reference key="2">
    <citation type="journal article" date="2001" name="Glycobiology">
        <title>Chromosomal localization and genomic organization for the galactose/ N-acetylgalactosamine/N-acetylglucosamine 6-O-sulfotransferase gene family.</title>
        <authorList>
            <person name="Hemmerich S."/>
            <person name="Lee J.K."/>
            <person name="Bhakta S."/>
            <person name="Bistrup A."/>
            <person name="Ruddle N.R."/>
            <person name="Rosen S.D."/>
        </authorList>
    </citation>
    <scope>NUCLEOTIDE SEQUENCE [MRNA]</scope>
    <scope>TISSUE SPECIFICITY</scope>
</reference>
<reference key="3">
    <citation type="submission" date="2005-09" db="EMBL/GenBank/DDBJ databases">
        <authorList>
            <person name="Mural R.J."/>
            <person name="Istrail S."/>
            <person name="Sutton G.G."/>
            <person name="Florea L."/>
            <person name="Halpern A.L."/>
            <person name="Mobarry C.M."/>
            <person name="Lippert R."/>
            <person name="Walenz B."/>
            <person name="Shatkay H."/>
            <person name="Dew I."/>
            <person name="Miller J.R."/>
            <person name="Flanigan M.J."/>
            <person name="Edwards N.J."/>
            <person name="Bolanos R."/>
            <person name="Fasulo D."/>
            <person name="Halldorsson B.V."/>
            <person name="Hannenhalli S."/>
            <person name="Turner R."/>
            <person name="Yooseph S."/>
            <person name="Lu F."/>
            <person name="Nusskern D.R."/>
            <person name="Shue B.C."/>
            <person name="Zheng X.H."/>
            <person name="Zhong F."/>
            <person name="Delcher A.L."/>
            <person name="Huson D.H."/>
            <person name="Kravitz S.A."/>
            <person name="Mouchard L."/>
            <person name="Reinert K."/>
            <person name="Remington K.A."/>
            <person name="Clark A.G."/>
            <person name="Waterman M.S."/>
            <person name="Eichler E.E."/>
            <person name="Adams M.D."/>
            <person name="Hunkapiller M.W."/>
            <person name="Myers E.W."/>
            <person name="Venter J.C."/>
        </authorList>
    </citation>
    <scope>NUCLEOTIDE SEQUENCE [LARGE SCALE GENOMIC DNA]</scope>
</reference>
<reference key="4">
    <citation type="journal article" date="2004" name="Genome Res.">
        <title>The status, quality, and expansion of the NIH full-length cDNA project: the Mammalian Gene Collection (MGC).</title>
        <authorList>
            <consortium name="The MGC Project Team"/>
        </authorList>
    </citation>
    <scope>NUCLEOTIDE SEQUENCE [LARGE SCALE MRNA]</scope>
    <source>
        <tissue>Lung</tissue>
    </source>
</reference>
<reference key="5">
    <citation type="journal article" date="2001" name="Biochem. Biophys. Res. Commun.">
        <title>Sulfation of endothelial mucin by corneal keratan N-acetylglucosamine 6-O-sulfotransferase (GST-4beta).</title>
        <authorList>
            <person name="Bartes A."/>
            <person name="Bhakta S."/>
            <person name="Hemmerich S."/>
        </authorList>
    </citation>
    <scope>FUNCTION</scope>
    <scope>TISSUE SPECIFICITY</scope>
</reference>
<reference key="6">
    <citation type="journal article" date="2001" name="J. Biol. Chem.">
        <title>Human corneal GlcNAc 6-O-sulfotransferase and mouse intestinal GlcNAc 6-O-sulfotransferase both produce keratan sulfate.</title>
        <authorList>
            <person name="Akama T.O."/>
            <person name="Nakayama J."/>
            <person name="Nishida K."/>
            <person name="Hiraoka N."/>
            <person name="Suzuki M."/>
            <person name="McAuliffe J."/>
            <person name="Hindsgaul O."/>
            <person name="Fukuda M."/>
            <person name="Fukuda M.N."/>
        </authorList>
    </citation>
    <scope>FUNCTION</scope>
    <scope>CATALYTIC ACTIVITY</scope>
    <scope>CHARACTERIZATION OF VARIANTS MCD CYS-50; ARG-174; GLU-203; TRP-211; THR-217 AND LYS-274</scope>
</reference>
<reference key="7">
    <citation type="journal article" date="2002" name="J. Biol. Chem.">
        <title>Enzymatic synthesis in vitro of the disulfated disaccharide unit of corneal keratan sulfate.</title>
        <authorList>
            <person name="Akama T.O."/>
            <person name="Misra A.K."/>
            <person name="Hindsgaul O."/>
            <person name="Fukuda M.N."/>
        </authorList>
    </citation>
    <scope>FUNCTION</scope>
    <scope>SUBSTRATE SPECIFICITY</scope>
    <scope>VARIANTS MCD CYS-50; ARG-174; GLU-203; TRP-211; THR-217 AND LYS-274</scope>
</reference>
<reference key="8">
    <citation type="journal article" date="2007" name="J. Biol. Chem.">
        <title>Enzymes responsible for synthesis of corneal keratan sulfate glycosaminoglycans.</title>
        <authorList>
            <person name="Kitayama K."/>
            <person name="Hayashida Y."/>
            <person name="Nishida K."/>
            <person name="Akama T.O."/>
        </authorList>
    </citation>
    <scope>FUNCTION</scope>
    <scope>CATALYTIC ACTIVITY</scope>
</reference>
<reference key="9">
    <citation type="journal article" date="2000" name="Mol. Vis.">
        <title>Mutations in corneal carbohydrate sulfotransferase 6 gene (CHST6) cause macular corneal dystrophy in Iceland.</title>
        <authorList>
            <person name="Liu N.-P."/>
            <person name="Dew-Knight S."/>
            <person name="Rayner M."/>
            <person name="Jonasson F."/>
            <person name="Akama T.O."/>
            <person name="Fukuda M.N."/>
            <person name="Bao W."/>
            <person name="Gilbert J.R."/>
            <person name="Vance J.M."/>
            <person name="Klintworth G.K."/>
        </authorList>
    </citation>
    <scope>VARIANTS MCD VAL-128 AND PRO-166</scope>
</reference>
<reference key="10">
    <citation type="journal article" date="2002" name="Invest. Ophthalmol. Vis. Sci.">
        <title>Identification of novel mutations in the carbohydrate sulfotransferase gene (CHST6) causing macular corneal dystrophy.</title>
        <authorList>
            <person name="El-Ashry M.F."/>
            <person name="El-Aziz M.M."/>
            <person name="Wilkins S."/>
            <person name="Cheetham M.E."/>
            <person name="Wilkie S.E."/>
            <person name="Hardcastle A.J."/>
            <person name="Halford S."/>
            <person name="Bayoumi A.Y."/>
            <person name="Ficker L.A."/>
            <person name="Tuft S."/>
            <person name="Bhattacharya S.S."/>
            <person name="Ebenezer N.D."/>
        </authorList>
    </citation>
    <scope>VARIANTS MCD SER-31; SER-72; SER-107; ARG-200 AND VAL-206</scope>
</reference>
<reference key="11">
    <citation type="journal article" date="2003" name="Invest. Ophthalmol. Vis. Sci.">
        <title>Truncating mutations in the carbohydrate sulfotransferase 6 gene (CHST6) result in macular corneal dystrophy.</title>
        <authorList>
            <person name="Niel F."/>
            <person name="Ellies P."/>
            <person name="Dighiero P."/>
            <person name="Soria J."/>
            <person name="Sabbagh C."/>
            <person name="San C."/>
            <person name="Renard G."/>
            <person name="Delpech M."/>
            <person name="Valleix S."/>
        </authorList>
    </citation>
    <scope>VARIANTS MCD PRO-15; THR-61; HIS-68; LEU-70; GLY-102; PRO-131; PRO-152; PRO-166; ARG-200 AND GLN-204</scope>
</reference>
<reference key="12">
    <citation type="journal article" date="2003" name="Invest. Ophthalmol. Vis. Sci.">
        <title>Mutations in the CHST6 gene in patients with macular corneal dystrophy: immunohistochemical evidence of heterogeneity.</title>
        <authorList>
            <person name="Iida-Hasegawa N."/>
            <person name="Furuhata A."/>
            <person name="Hayatsu H."/>
            <person name="Murakami A."/>
            <person name="Fujiki K."/>
            <person name="Nakayasu K."/>
            <person name="Kanai A."/>
        </authorList>
    </citation>
    <scope>VARIANTS MCD HIS-177; GLN-204; LEU-205; TRP-211 AND THR-217</scope>
</reference>
<reference key="13">
    <citation type="journal article" date="2003" name="Cornea">
        <title>Identification of novel mutations of the CHST6 gene in Vietnamese families affected with macular corneal dystrophy in two generations.</title>
        <authorList>
            <person name="Ha N.T."/>
            <person name="Chau H.M."/>
            <person name="Cung le X."/>
            <person name="Thanh T.K."/>
            <person name="Fujiki K."/>
            <person name="Murakami A."/>
            <person name="Hiratsuka Y."/>
            <person name="Hasegawa N."/>
            <person name="Kanai A."/>
        </authorList>
    </citation>
    <scope>VARIANT MCD GLN-211</scope>
</reference>
<reference key="14">
    <citation type="journal article" date="2003" name="Invest. Ophthalmol. Vis. Sci.">
        <title>Mutation analysis of the carbohydrate sulfotransferase gene in Vietnamese with macular corneal dystrophy.</title>
        <authorList>
            <person name="Ha N.T."/>
            <person name="Chau H.M."/>
            <person name="Cung le X."/>
            <person name="Thanh T.K."/>
            <person name="Fujiki K."/>
            <person name="Murakami A."/>
            <person name="Hiratsuka Y."/>
            <person name="Kanai A."/>
        </authorList>
    </citation>
    <scope>VARIANTS MCD LEU-51; PRO-59; LEU-66; MET-76; GLN-211; GLN-211; CYS-268 AND CYS-268</scope>
</reference>
<reference key="15">
    <citation type="journal article" date="2003" name="Arch. Ophthalmol.">
        <title>Novel mutations in the CHST6 gene associated with macular corneal dystrophy in southern India.</title>
        <authorList>
            <person name="Warren J.F."/>
            <person name="Aldave A.J."/>
            <person name="Srinivasan M."/>
            <person name="Thonar E.J."/>
            <person name="Kumar A.B."/>
            <person name="Cevallos V."/>
            <person name="Whitcher J.P."/>
            <person name="Margolis T.P."/>
        </authorList>
    </citation>
    <scope>VARIANTS MCD ARG-22; TYR-42; LEU-53; HIS-93; PRO-97; TYR-102; CYS-127; GLN-205; THR-206; PRO-249 AND LYS-274</scope>
</reference>
<reference key="16">
    <citation type="journal article" date="2003" name="Mol. Vis.">
        <title>Novel mutations of the carbohydrate sulfotransferase-6 (CHST6) gene causing macular corneal dystrophy in India.</title>
        <authorList>
            <person name="Sultana A."/>
            <person name="Sridhar M.S."/>
            <person name="Jagannathan A."/>
            <person name="Balasubramanian D."/>
            <person name="Kannabiran C."/>
            <person name="Klintworth G.K."/>
        </authorList>
    </citation>
    <scope>VARIANTS MCD ASP-52; LEU-53; TRP-98; SER-107; LEU-121; SER-202; GLN-204; PHE-210; GLU-221 AND TYR-221</scope>
</reference>
<reference key="17">
    <citation type="journal article" date="2004" name="Clin. Genet.">
        <title>Novel mutations in the CHST6 gene causing macular corneal dystrophy.</title>
        <authorList>
            <person name="Abbruzzese C."/>
            <person name="Kuhn U."/>
            <person name="Molina F."/>
            <person name="Rama P."/>
            <person name="De Luca M."/>
        </authorList>
    </citation>
    <scope>VARIANTS MCD GLY-102; GLY-162; GLU-198 AND ARG-200</scope>
</reference>
<reference key="18">
    <citation type="journal article" date="2004" name="Am. J. Ophthalmol.">
        <title>Novel mutations in the carbohydrate sulfotransferase gene (CHST6) in American patients with macular corneal dystrophy.</title>
        <authorList>
            <person name="Aldave A.J."/>
            <person name="Yellore V.S."/>
            <person name="Thonar E.J."/>
            <person name="Udar N."/>
            <person name="Warren J.F."/>
            <person name="Yoon M.K."/>
            <person name="Cohen E.J."/>
            <person name="Rapuano C.J."/>
            <person name="Laibson P.R."/>
            <person name="Margolis T.P."/>
            <person name="Small K."/>
        </authorList>
    </citation>
    <scope>VARIANTS MCD LEU-51; SER-72; GLY-102; VAL-104; CYS-110; PRO-122; ARG-200 AND PRO-276</scope>
</reference>
<reference key="19">
    <citation type="journal article" date="2005" name="Am. J. Ophthalmol.">
        <title>Novel CHST6 nonsense and missense mutations responsible for macular corneal dystrophy.</title>
        <authorList>
            <person name="El-Ashry M.F."/>
            <person name="Abd El-Aziz M.M."/>
            <person name="Shalaby O."/>
            <person name="Wilkins S."/>
            <person name="Poopalasundaram S."/>
            <person name="Cheetham M."/>
            <person name="Tuft S.J."/>
            <person name="Hardcastle A.J."/>
            <person name="Bhattacharya S.S."/>
            <person name="Ebenezer N.D."/>
        </authorList>
    </citation>
    <scope>VARIANTS MCD ARG-200; PRO-276 AND ASP-358</scope>
</reference>
<reference key="20">
    <citation type="journal article" date="2009" name="Mol. Vis.">
        <title>Macular corneal dystrophy in a Chinese family related with novel mutations of CHST6.</title>
        <authorList>
            <person name="Dang X."/>
            <person name="Zhu Q."/>
            <person name="Wang L."/>
            <person name="Su H."/>
            <person name="Lin H."/>
            <person name="Zhou N."/>
            <person name="Liang T."/>
            <person name="Wang Z."/>
            <person name="Huang S."/>
            <person name="Ren Q."/>
            <person name="Qi Y."/>
        </authorList>
    </citation>
    <scope>VARIANT MCD HIS-358</scope>
</reference>
<reference key="21">
    <citation type="journal article" date="2011" name="Cornea">
        <title>Novel CHST6 gene mutations in 2 unrelated cases of macular corneal dystrophy.</title>
        <authorList>
            <person name="Patel D.A."/>
            <person name="Harocopos G.J."/>
            <person name="Chang S.H."/>
            <person name="Vora S.C."/>
            <person name="Lubniewski A.J."/>
            <person name="Huang A.J."/>
        </authorList>
    </citation>
    <scope>VARIANTS MCD GLY-177; ARG-186 AND GLN-211</scope>
</reference>
<reference key="22">
    <citation type="journal article" date="2013" name="Korean J. Ophthalmol.">
        <title>A case of Korean patient with macular corneal dystrophy associated with novel mutation in the CHST6 gene.</title>
        <authorList>
            <person name="Lee Y.K."/>
            <person name="Chang D.J."/>
            <person name="Chung S.K."/>
        </authorList>
    </citation>
    <scope>VARIANT MCD TRP-205</scope>
</reference>
<reference key="23">
    <citation type="journal article" date="2015" name="Mol. Vis.">
        <title>Molecular analysis of the CHST6 gene in Korean patients with macular corneal dystrophy: Identification of three novel mutations.</title>
        <authorList>
            <person name="Park S.H."/>
            <person name="Ahn Y.J."/>
            <person name="Chae H."/>
            <person name="Kim Y."/>
            <person name="Kim M.S."/>
            <person name="Kim M."/>
        </authorList>
    </citation>
    <scope>VARIANTS MCD PHE-118; ARG-174; ARG-186; TRP-205; LYS-274; TYR-308 AND HIS-358</scope>
</reference>
<organism>
    <name type="scientific">Homo sapiens</name>
    <name type="common">Human</name>
    <dbReference type="NCBI Taxonomy" id="9606"/>
    <lineage>
        <taxon>Eukaryota</taxon>
        <taxon>Metazoa</taxon>
        <taxon>Chordata</taxon>
        <taxon>Craniata</taxon>
        <taxon>Vertebrata</taxon>
        <taxon>Euteleostomi</taxon>
        <taxon>Mammalia</taxon>
        <taxon>Eutheria</taxon>
        <taxon>Euarchontoglires</taxon>
        <taxon>Primates</taxon>
        <taxon>Haplorrhini</taxon>
        <taxon>Catarrhini</taxon>
        <taxon>Hominidae</taxon>
        <taxon>Homo</taxon>
    </lineage>
</organism>
<accession>Q9GZX3</accession>
<accession>D3DUK3</accession>
<name>CHST6_HUMAN</name>
<gene>
    <name evidence="26" type="primary">CHST6</name>
</gene>
<proteinExistence type="evidence at protein level"/>
<comment type="function">
    <text evidence="6 7 9 19">Sulfotransferase that utilizes 3'-phospho-5'-adenylyl sulfate (PAPS) as sulfonate donor to catalyze the transfer of sulfate to position 6 of non-reducing N-acetylglucosamine (GlcNAc) residues of keratan (PubMed:11278593, PubMed:11352640, PubMed:12218059, PubMed:17690104). Cooperates with B4GALT4 galactosyltransferase and B3GNT7 N-acetylglucosaminyltransferase to construct and elongate the sulfated disaccharide unit [-&gt;3Galbeta1-&gt;4(6-sulfoGlcNAcbeta)1-&gt;] within keratan sulfate polymer. Involved in biosynthesis of keratan sulfate in cornea, with an impact on proteoglycan fibril organization and corneal transparency (PubMed:11278593, PubMed:12218059, PubMed:17690104). Involved in sulfation of endothelial mucins such as GLYCAM1 (PubMed:11352640).</text>
</comment>
<comment type="catalytic activity">
    <reaction evidence="6 19">
        <text>3'-phosphoadenylyl sulfate + keratan = adenosine 3',5'-bisphosphate + keratan 6'-sulfate.</text>
        <dbReference type="EC" id="2.8.2.21"/>
    </reaction>
</comment>
<comment type="subcellular location">
    <subcellularLocation>
        <location evidence="1">Golgi apparatus membrane</location>
        <topology evidence="1">Single-pass type II membrane protein</topology>
    </subcellularLocation>
</comment>
<comment type="tissue specificity">
    <text evidence="3 5 7">Expressed in cornea. Mainly expressed in brain. Also expressed in spinal cord and trachea.</text>
</comment>
<comment type="disease" evidence="3 4 6 8 9 10 11 12 13 14 15 16 17 18 20 21 22 23">
    <disease id="DI-01925">
        <name>Macular dystrophy, corneal</name>
        <acronym>MCD</acronym>
        <description>An ocular disease characterized by bilateral, progressive corneal opacification, and reduced corneal sensitivity. Onset occurs in the first decade, usually between ages 5 and 9. Painful attacks with photophobia, foreign body sensations, and recurrent erosions occur in most patients. The disease is due to deposition of an unsulfated keratan sulfate both within the intracellular space (within the keratocytes and endothelial cells) and in the extracellular corneal stroma. Macular corneal dystrophy is divided into the clinically indistinguishable types I, IA, and II based on analysis of the normally sulfated, or antigenic, keratan sulfate levels in serum and immunohistochemical evaluation of the cornea. Patients with types I and IA macular corneal dystrophy have undetectable serum levels of antigenic keratan sulfate, whereas those with type II macular corneal dystrophy have normal or low levels, depending on the population examined.</description>
        <dbReference type="MIM" id="217800"/>
    </disease>
    <text>The disease is caused by variants affecting the gene represented in this entry. CHST6 homozygous missense mutations have been observed in patients with macular corneal dystrophy type I, while type II patients show a large deletion and replacement in the upstream region of CHST6. The only missense mutation for type II is Cys-50, which is heterozygous with a replacement in the upstream region on the other allele of CHST6.</text>
</comment>
<comment type="similarity">
    <text evidence="25">Belongs to the sulfotransferase 1 family. Gal/GlcNAc/GalNAc subfamily.</text>
</comment>
<feature type="chain" id="PRO_0000085197" description="Carbohydrate sulfotransferase 6">
    <location>
        <begin position="1"/>
        <end position="395"/>
    </location>
</feature>
<feature type="topological domain" description="Cytoplasmic" evidence="2">
    <location>
        <begin position="1"/>
        <end position="5"/>
    </location>
</feature>
<feature type="transmembrane region" description="Helical; Signal-anchor for type II membrane protein" evidence="2">
    <location>
        <begin position="6"/>
        <end position="26"/>
    </location>
</feature>
<feature type="topological domain" description="Lumenal" evidence="2">
    <location>
        <begin position="27"/>
        <end position="395"/>
    </location>
</feature>
<feature type="binding site" evidence="1">
    <location>
        <begin position="49"/>
        <end position="55"/>
    </location>
    <ligand>
        <name>3'-phosphoadenylyl sulfate</name>
        <dbReference type="ChEBI" id="CHEBI:58339"/>
    </ligand>
</feature>
<feature type="binding site" evidence="1">
    <location>
        <begin position="202"/>
        <end position="210"/>
    </location>
    <ligand>
        <name>3'-phosphoadenylyl sulfate</name>
        <dbReference type="ChEBI" id="CHEBI:58339"/>
    </ligand>
</feature>
<feature type="glycosylation site" description="N-linked (GlcNAc...) asparagine" evidence="2">
    <location>
        <position position="116"/>
    </location>
</feature>
<feature type="glycosylation site" description="N-linked (GlcNAc...) asparagine" evidence="2">
    <location>
        <position position="229"/>
    </location>
</feature>
<feature type="glycosylation site" description="N-linked (GlcNAc...) asparagine" evidence="2">
    <location>
        <position position="305"/>
    </location>
</feature>
<feature type="glycosylation site" description="N-linked (GlcNAc...) asparagine" evidence="2">
    <location>
        <position position="328"/>
    </location>
</feature>
<feature type="sequence variant" id="VAR_021417" description="In MCD." evidence="10">
    <original>L</original>
    <variation>P</variation>
    <location>
        <position position="15"/>
    </location>
</feature>
<feature type="sequence variant" id="VAR_021418" description="In MCD; dbSNP:rs68043642." evidence="14">
    <original>L</original>
    <variation>R</variation>
    <location>
        <position position="22"/>
    </location>
</feature>
<feature type="sequence variant" id="VAR_021419" description="In MCD; dbSNP:rs72547549." evidence="8">
    <original>P</original>
    <variation>S</variation>
    <location>
        <position position="31"/>
    </location>
</feature>
<feature type="sequence variant" id="VAR_021420" description="In MCD." evidence="14">
    <original>H</original>
    <variation>Y</variation>
    <location>
        <position position="42"/>
    </location>
</feature>
<feature type="sequence variant" id="VAR_021421" description="In MCD; abolishes the ability to sulfate keratan; dbSNP:rs28937877." evidence="3 6 9">
    <original>R</original>
    <variation>C</variation>
    <location>
        <position position="50"/>
    </location>
</feature>
<feature type="sequence variant" id="VAR_021422" description="In MCD; dbSNP:rs370335460." evidence="12 17">
    <original>S</original>
    <variation>L</variation>
    <location>
        <position position="51"/>
    </location>
</feature>
<feature type="sequence variant" id="VAR_021423" description="In MCD." evidence="15">
    <original>G</original>
    <variation>D</variation>
    <location>
        <position position="52"/>
    </location>
</feature>
<feature type="sequence variant" id="VAR_021424" description="In MCD." evidence="14 15">
    <original>S</original>
    <variation>L</variation>
    <location>
        <position position="53"/>
    </location>
</feature>
<feature type="sequence variant" id="VAR_021425" description="In MCD." evidence="12">
    <original>L</original>
    <variation>P</variation>
    <location>
        <position position="59"/>
    </location>
</feature>
<feature type="sequence variant" id="VAR_021426" description="In MCD; dbSNP:rs72547548." evidence="10">
    <original>N</original>
    <variation>T</variation>
    <location>
        <position position="61"/>
    </location>
</feature>
<feature type="sequence variant" id="VAR_021427" description="In MCD; dbSNP:rs72547547." evidence="12">
    <original>V</original>
    <variation>L</variation>
    <location>
        <position position="66"/>
    </location>
</feature>
<feature type="sequence variant" id="VAR_021428" description="In MCD; dbSNP:rs775742450." evidence="10">
    <original>Y</original>
    <variation>H</variation>
    <location>
        <position position="68"/>
    </location>
</feature>
<feature type="sequence variant" id="VAR_021429" description="In MCD." evidence="10">
    <original>M</original>
    <variation>L</variation>
    <location>
        <position position="70"/>
    </location>
</feature>
<feature type="sequence variant" id="VAR_021430" description="In MCD; dbSNP:rs377617168." evidence="8 17">
    <original>P</original>
    <variation>S</variation>
    <location>
        <position position="72"/>
    </location>
</feature>
<feature type="sequence variant" id="VAR_021431" description="In MCD." evidence="12">
    <original>V</original>
    <variation>M</variation>
    <location>
        <position position="76"/>
    </location>
</feature>
<feature type="sequence variant" id="VAR_021432" description="In MCD." evidence="14">
    <original>R</original>
    <variation>H</variation>
    <location>
        <position position="93"/>
    </location>
</feature>
<feature type="sequence variant" id="VAR_021433" description="In MCD; dbSNP:rs72547546." evidence="14">
    <original>R</original>
    <variation>P</variation>
    <location>
        <position position="97"/>
    </location>
</feature>
<feature type="sequence variant" id="VAR_021434" description="In MCD." evidence="15">
    <original>S</original>
    <variation>W</variation>
    <location>
        <position position="98"/>
    </location>
</feature>
<feature type="sequence variant" id="VAR_021435" description="In MCD; dbSNP:rs121917822." evidence="10 16 17">
    <original>C</original>
    <variation>G</variation>
    <location>
        <position position="102"/>
    </location>
</feature>
<feature type="sequence variant" id="VAR_021436" description="In MCD." evidence="14">
    <original>C</original>
    <variation>Y</variation>
    <location>
        <position position="102"/>
    </location>
</feature>
<feature type="sequence variant" id="VAR_021437" description="In MCD; dbSNP:rs1158093021." evidence="17">
    <original>M</original>
    <variation>V</variation>
    <location>
        <position position="104"/>
    </location>
</feature>
<feature type="sequence variant" id="VAR_021438" description="In MCD; dbSNP:rs72547545." evidence="8 15">
    <original>F</original>
    <variation>S</variation>
    <location>
        <position position="107"/>
    </location>
</feature>
<feature type="sequence variant" id="VAR_021439" description="In MCD; dbSNP:rs72547544." evidence="17">
    <original>Y</original>
    <variation>C</variation>
    <location>
        <position position="110"/>
    </location>
</feature>
<feature type="sequence variant" id="VAR_075522" description="In MCD; uncertain significance." evidence="23">
    <original>S</original>
    <variation>F</variation>
    <location>
        <position position="118"/>
    </location>
</feature>
<feature type="sequence variant" id="VAR_021440" description="In MCD; dbSNP:rs1265310255." evidence="15">
    <original>F</original>
    <variation>L</variation>
    <location>
        <position position="121"/>
    </location>
</feature>
<feature type="sequence variant" id="VAR_021441" description="In MCD; dbSNP:rs758105699." evidence="17">
    <original>Q</original>
    <variation>P</variation>
    <location>
        <position position="122"/>
    </location>
</feature>
<feature type="sequence variant" id="VAR_021442" description="In MCD." evidence="14">
    <original>R</original>
    <variation>C</variation>
    <location>
        <position position="127"/>
    </location>
</feature>
<feature type="sequence variant" id="VAR_021443" description="In MCD; dbSNP:rs72547543." evidence="4">
    <original>A</original>
    <variation>V</variation>
    <location>
        <position position="128"/>
    </location>
</feature>
<feature type="sequence variant" id="VAR_021444" description="In MCD." evidence="10">
    <original>S</original>
    <variation>P</variation>
    <location>
        <position position="131"/>
    </location>
</feature>
<feature type="sequence variant" id="VAR_021445" description="In MCD; dbSNP:rs142954809." evidence="10">
    <original>L</original>
    <variation>P</variation>
    <location>
        <position position="152"/>
    </location>
</feature>
<feature type="sequence variant" id="VAR_021446" description="In MCD; dbSNP:rs117435647." evidence="16">
    <original>R</original>
    <variation>G</variation>
    <location>
        <position position="162"/>
    </location>
</feature>
<feature type="sequence variant" id="VAR_021447" description="In MCD; dbSNP:rs72547542." evidence="4 10">
    <original>R</original>
    <variation>P</variation>
    <location>
        <position position="166"/>
    </location>
</feature>
<feature type="sequence variant" id="VAR_021448" description="In MCD; abolishes the ability to sulfate keratan; dbSNP:rs28937877." evidence="3 9 23">
    <original>K</original>
    <variation>R</variation>
    <location>
        <position position="174"/>
    </location>
</feature>
<feature type="sequence variant" id="VAR_075523" description="In MCD." evidence="21">
    <original>R</original>
    <variation>G</variation>
    <location>
        <position position="177"/>
    </location>
</feature>
<feature type="sequence variant" id="VAR_021449" description="In MCD." evidence="11">
    <original>R</original>
    <variation>H</variation>
    <location>
        <position position="177"/>
    </location>
</feature>
<feature type="sequence variant" id="VAR_075524" description="In MCD; dbSNP:rs376162109." evidence="21 23">
    <original>P</original>
    <variation>R</variation>
    <location>
        <position position="186"/>
    </location>
</feature>
<feature type="sequence variant" id="VAR_021450" description="In MCD." evidence="16">
    <original>V</original>
    <variation>E</variation>
    <location>
        <position position="198"/>
    </location>
</feature>
<feature type="sequence variant" id="VAR_021451" description="In MCD; dbSNP:rs28937879." evidence="8 10 16 17 18">
    <original>L</original>
    <variation>R</variation>
    <location>
        <position position="200"/>
    </location>
</feature>
<feature type="sequence variant" id="VAR_021452" description="In MCD." evidence="15">
    <original>R</original>
    <variation>S</variation>
    <location>
        <position position="202"/>
    </location>
</feature>
<feature type="sequence variant" id="VAR_021453" description="In MCD; abolishes the ability to sulfate keratan; dbSNP:rs28937878." evidence="3 6 9">
    <original>D</original>
    <variation>E</variation>
    <location>
        <position position="203"/>
    </location>
</feature>
<feature type="sequence variant" id="VAR_021454" description="In MCD; dbSNP:rs759870075." evidence="10 11 15">
    <original>P</original>
    <variation>Q</variation>
    <location>
        <position position="204"/>
    </location>
</feature>
<feature type="sequence variant" id="VAR_021455" description="In MCD." evidence="11">
    <original>R</original>
    <variation>L</variation>
    <location>
        <position position="205"/>
    </location>
</feature>
<feature type="sequence variant" id="VAR_021456" description="In MCD; dbSNP:rs377706989." evidence="14">
    <original>R</original>
    <variation>Q</variation>
    <location>
        <position position="205"/>
    </location>
</feature>
<feature type="sequence variant" id="VAR_075525" description="In MCD; dbSNP:rs750219546." evidence="22 23">
    <original>R</original>
    <variation>W</variation>
    <location>
        <position position="205"/>
    </location>
</feature>
<feature type="sequence variant" id="VAR_021457" description="In MCD; dbSNP:rs374493344." evidence="14">
    <original>A</original>
    <variation>T</variation>
    <location>
        <position position="206"/>
    </location>
</feature>
<feature type="sequence variant" id="VAR_021458" description="In MCD." evidence="8">
    <original>A</original>
    <variation>V</variation>
    <location>
        <position position="206"/>
    </location>
</feature>
<feature type="sequence variant" id="VAR_021459" description="In MCD; dbSNP:rs745571211." evidence="15">
    <original>S</original>
    <variation>F</variation>
    <location>
        <position position="210"/>
    </location>
</feature>
<feature type="sequence variant" id="VAR_021460" description="In MCD; dbSNP:rs771397083." evidence="12 13 21">
    <original>R</original>
    <variation>Q</variation>
    <location>
        <position position="211"/>
    </location>
</feature>
<feature type="sequence variant" id="VAR_021461" description="In MCD; abolishes the ability to sulfate keratan; dbSNP:rs202175444." evidence="3 6 9 11">
    <original>R</original>
    <variation>W</variation>
    <location>
        <position position="211"/>
    </location>
</feature>
<feature type="sequence variant" id="VAR_021462" description="In MCD; abolishes ability to sulfate keratan; dbSNP:rs752785520." evidence="6 9 11">
    <original>A</original>
    <variation>T</variation>
    <location>
        <position position="217"/>
    </location>
</feature>
<feature type="sequence variant" id="VAR_021463" description="In MCD." evidence="15">
    <original>D</original>
    <variation>E</variation>
    <location>
        <position position="221"/>
    </location>
</feature>
<feature type="sequence variant" id="VAR_021464" description="In MCD." evidence="15">
    <original>D</original>
    <variation>Y</variation>
    <location>
        <position position="221"/>
    </location>
</feature>
<feature type="sequence variant" id="VAR_021465" description="In MCD; dbSNP:rs72547540." evidence="14">
    <original>H</original>
    <variation>P</variation>
    <location>
        <position position="249"/>
    </location>
</feature>
<feature type="sequence variant" id="VAR_021466" description="In MCD; dbSNP:rs72547539." evidence="12">
    <original>Y</original>
    <variation>C</variation>
    <location>
        <position position="268"/>
    </location>
</feature>
<feature type="sequence variant" id="VAR_021467" description="In MCD; abolishes the ability to sulfate keratan; dbSNP:rs72547538." evidence="3 6 9 14 23">
    <original>E</original>
    <variation>K</variation>
    <location>
        <position position="274"/>
    </location>
</feature>
<feature type="sequence variant" id="VAR_021468" description="In MCD; dbSNP:rs121917824." evidence="17 18">
    <original>L</original>
    <variation>P</variation>
    <location>
        <position position="276"/>
    </location>
</feature>
<feature type="sequence variant" id="VAR_075526" description="In MCD; uncertain significance." evidence="23">
    <original>H</original>
    <variation>Y</variation>
    <location>
        <position position="308"/>
    </location>
</feature>
<feature type="sequence variant" id="VAR_021469" description="In MCD." evidence="18">
    <original>Y</original>
    <variation>D</variation>
    <location>
        <position position="358"/>
    </location>
</feature>
<feature type="sequence variant" id="VAR_075527" description="In MCD; dbSNP:rs1384294258." evidence="20 23">
    <original>Y</original>
    <variation>H</variation>
    <location>
        <position position="358"/>
    </location>
</feature>
<feature type="sequence variant" id="VAR_033735" description="In dbSNP:rs35036798.">
    <original>N</original>
    <variation>D</variation>
    <location>
        <position position="369"/>
    </location>
</feature>
<keyword id="KW-0119">Carbohydrate metabolism</keyword>
<keyword id="KW-1212">Corneal dystrophy</keyword>
<keyword id="KW-0225">Disease variant</keyword>
<keyword id="KW-0325">Glycoprotein</keyword>
<keyword id="KW-0333">Golgi apparatus</keyword>
<keyword id="KW-0472">Membrane</keyword>
<keyword id="KW-1267">Proteomics identification</keyword>
<keyword id="KW-1185">Reference proteome</keyword>
<keyword id="KW-0735">Signal-anchor</keyword>
<keyword id="KW-0808">Transferase</keyword>
<keyword id="KW-0812">Transmembrane</keyword>
<keyword id="KW-1133">Transmembrane helix</keyword>